<proteinExistence type="inferred from homology"/>
<organism>
    <name type="scientific">Acidithiobacillus ferrooxidans (strain ATCC 23270 / DSM 14882 / CIP 104768 / NCIMB 8455)</name>
    <name type="common">Ferrobacillus ferrooxidans (strain ATCC 23270)</name>
    <dbReference type="NCBI Taxonomy" id="243159"/>
    <lineage>
        <taxon>Bacteria</taxon>
        <taxon>Pseudomonadati</taxon>
        <taxon>Pseudomonadota</taxon>
        <taxon>Acidithiobacillia</taxon>
        <taxon>Acidithiobacillales</taxon>
        <taxon>Acidithiobacillaceae</taxon>
        <taxon>Acidithiobacillus</taxon>
    </lineage>
</organism>
<accession>B7J3G0</accession>
<sequence>MSGHSKWSTIKFKKALKDAKRGKIFTRLIREITVAARAGGGDPASNSRLRLALDKAYGANMTKDTIERAIKRGTGELEGVDYEEVTYEGYGPGGVAILIETMTDNKVRTVAEVRHIFSKRGGNMGTAGSVAYQFKKLGLIVFPADADEDRILEAALEAGAEDVVNEGERIAVYTAPSDLHSVVLALEAAGLKPEESEMTMIPENTIEVSGEEAEKLLRLIDFLEENDDVQNVYANYDISDEEMARLEATS</sequence>
<name>Y059_ACIF2</name>
<dbReference type="EMBL" id="CP001219">
    <property type="protein sequence ID" value="ACK79155.1"/>
    <property type="molecule type" value="Genomic_DNA"/>
</dbReference>
<dbReference type="RefSeq" id="WP_009567690.1">
    <property type="nucleotide sequence ID" value="NC_011761.1"/>
</dbReference>
<dbReference type="SMR" id="B7J3G0"/>
<dbReference type="STRING" id="243159.AFE_0059"/>
<dbReference type="PaxDb" id="243159-AFE_0059"/>
<dbReference type="GeneID" id="65279458"/>
<dbReference type="KEGG" id="afr:AFE_0059"/>
<dbReference type="eggNOG" id="COG0217">
    <property type="taxonomic scope" value="Bacteria"/>
</dbReference>
<dbReference type="HOGENOM" id="CLU_062974_2_2_6"/>
<dbReference type="Proteomes" id="UP000001362">
    <property type="component" value="Chromosome"/>
</dbReference>
<dbReference type="GO" id="GO:0005829">
    <property type="term" value="C:cytosol"/>
    <property type="evidence" value="ECO:0007669"/>
    <property type="project" value="TreeGrafter"/>
</dbReference>
<dbReference type="GO" id="GO:0003677">
    <property type="term" value="F:DNA binding"/>
    <property type="evidence" value="ECO:0007669"/>
    <property type="project" value="UniProtKB-UniRule"/>
</dbReference>
<dbReference type="GO" id="GO:0006355">
    <property type="term" value="P:regulation of DNA-templated transcription"/>
    <property type="evidence" value="ECO:0007669"/>
    <property type="project" value="UniProtKB-UniRule"/>
</dbReference>
<dbReference type="FunFam" id="1.10.10.200:FF:000002">
    <property type="entry name" value="Probable transcriptional regulatory protein CLM62_37755"/>
    <property type="match status" value="1"/>
</dbReference>
<dbReference type="FunFam" id="3.30.70.980:FF:000002">
    <property type="entry name" value="Probable transcriptional regulatory protein YebC"/>
    <property type="match status" value="1"/>
</dbReference>
<dbReference type="Gene3D" id="1.10.10.200">
    <property type="match status" value="1"/>
</dbReference>
<dbReference type="Gene3D" id="3.30.70.980">
    <property type="match status" value="2"/>
</dbReference>
<dbReference type="HAMAP" id="MF_00693">
    <property type="entry name" value="Transcrip_reg_TACO1"/>
    <property type="match status" value="1"/>
</dbReference>
<dbReference type="InterPro" id="IPR017856">
    <property type="entry name" value="Integrase-like_N"/>
</dbReference>
<dbReference type="InterPro" id="IPR048300">
    <property type="entry name" value="TACO1_YebC-like_2nd/3rd_dom"/>
</dbReference>
<dbReference type="InterPro" id="IPR049083">
    <property type="entry name" value="TACO1_YebC_N"/>
</dbReference>
<dbReference type="InterPro" id="IPR002876">
    <property type="entry name" value="Transcrip_reg_TACO1-like"/>
</dbReference>
<dbReference type="InterPro" id="IPR026564">
    <property type="entry name" value="Transcrip_reg_TACO1-like_dom3"/>
</dbReference>
<dbReference type="InterPro" id="IPR029072">
    <property type="entry name" value="YebC-like"/>
</dbReference>
<dbReference type="NCBIfam" id="NF001030">
    <property type="entry name" value="PRK00110.1"/>
    <property type="match status" value="1"/>
</dbReference>
<dbReference type="NCBIfam" id="NF009044">
    <property type="entry name" value="PRK12378.1"/>
    <property type="match status" value="1"/>
</dbReference>
<dbReference type="NCBIfam" id="TIGR01033">
    <property type="entry name" value="YebC/PmpR family DNA-binding transcriptional regulator"/>
    <property type="match status" value="1"/>
</dbReference>
<dbReference type="PANTHER" id="PTHR12532:SF6">
    <property type="entry name" value="TRANSCRIPTIONAL REGULATORY PROTEIN YEBC-RELATED"/>
    <property type="match status" value="1"/>
</dbReference>
<dbReference type="PANTHER" id="PTHR12532">
    <property type="entry name" value="TRANSLATIONAL ACTIVATOR OF CYTOCHROME C OXIDASE 1"/>
    <property type="match status" value="1"/>
</dbReference>
<dbReference type="Pfam" id="PF20772">
    <property type="entry name" value="TACO1_YebC_N"/>
    <property type="match status" value="1"/>
</dbReference>
<dbReference type="Pfam" id="PF01709">
    <property type="entry name" value="Transcrip_reg"/>
    <property type="match status" value="1"/>
</dbReference>
<dbReference type="SUPFAM" id="SSF75625">
    <property type="entry name" value="YebC-like"/>
    <property type="match status" value="1"/>
</dbReference>
<reference key="1">
    <citation type="journal article" date="2008" name="BMC Genomics">
        <title>Acidithiobacillus ferrooxidans metabolism: from genome sequence to industrial applications.</title>
        <authorList>
            <person name="Valdes J."/>
            <person name="Pedroso I."/>
            <person name="Quatrini R."/>
            <person name="Dodson R.J."/>
            <person name="Tettelin H."/>
            <person name="Blake R. II"/>
            <person name="Eisen J.A."/>
            <person name="Holmes D.S."/>
        </authorList>
    </citation>
    <scope>NUCLEOTIDE SEQUENCE [LARGE SCALE GENOMIC DNA]</scope>
    <source>
        <strain>ATCC 23270 / DSM 14882 / CIP 104768 / NCIMB 8455</strain>
    </source>
</reference>
<keyword id="KW-0963">Cytoplasm</keyword>
<keyword id="KW-0238">DNA-binding</keyword>
<keyword id="KW-1185">Reference proteome</keyword>
<keyword id="KW-0804">Transcription</keyword>
<keyword id="KW-0805">Transcription regulation</keyword>
<gene>
    <name type="ordered locus">AFE_0059</name>
</gene>
<protein>
    <recommendedName>
        <fullName evidence="1">Probable transcriptional regulatory protein AFE_0059</fullName>
    </recommendedName>
</protein>
<comment type="subcellular location">
    <subcellularLocation>
        <location evidence="1">Cytoplasm</location>
    </subcellularLocation>
</comment>
<comment type="similarity">
    <text evidence="1">Belongs to the TACO1 family.</text>
</comment>
<feature type="chain" id="PRO_1000132141" description="Probable transcriptional regulatory protein AFE_0059">
    <location>
        <begin position="1"/>
        <end position="250"/>
    </location>
</feature>
<evidence type="ECO:0000255" key="1">
    <source>
        <dbReference type="HAMAP-Rule" id="MF_00693"/>
    </source>
</evidence>